<organism>
    <name type="scientific">Escherichia coli O157:H7</name>
    <dbReference type="NCBI Taxonomy" id="83334"/>
    <lineage>
        <taxon>Bacteria</taxon>
        <taxon>Pseudomonadati</taxon>
        <taxon>Pseudomonadota</taxon>
        <taxon>Gammaproteobacteria</taxon>
        <taxon>Enterobacterales</taxon>
        <taxon>Enterobacteriaceae</taxon>
        <taxon>Escherichia</taxon>
    </lineage>
</organism>
<accession>P62769</accession>
<accession>P37048</accession>
<reference key="1">
    <citation type="journal article" date="2001" name="Nature">
        <title>Genome sequence of enterohaemorrhagic Escherichia coli O157:H7.</title>
        <authorList>
            <person name="Perna N.T."/>
            <person name="Plunkett G. III"/>
            <person name="Burland V."/>
            <person name="Mau B."/>
            <person name="Glasner J.D."/>
            <person name="Rose D.J."/>
            <person name="Mayhew G.F."/>
            <person name="Evans P.S."/>
            <person name="Gregor J."/>
            <person name="Kirkpatrick H.A."/>
            <person name="Posfai G."/>
            <person name="Hackett J."/>
            <person name="Klink S."/>
            <person name="Boutin A."/>
            <person name="Shao Y."/>
            <person name="Miller L."/>
            <person name="Grotbeck E.J."/>
            <person name="Davis N.W."/>
            <person name="Lim A."/>
            <person name="Dimalanta E.T."/>
            <person name="Potamousis K."/>
            <person name="Apodaca J."/>
            <person name="Anantharaman T.S."/>
            <person name="Lin J."/>
            <person name="Yen G."/>
            <person name="Schwartz D.C."/>
            <person name="Welch R.A."/>
            <person name="Blattner F.R."/>
        </authorList>
    </citation>
    <scope>NUCLEOTIDE SEQUENCE [LARGE SCALE GENOMIC DNA]</scope>
    <source>
        <strain>O157:H7 / EDL933 / ATCC 700927 / EHEC</strain>
    </source>
</reference>
<reference key="2">
    <citation type="journal article" date="2001" name="DNA Res.">
        <title>Complete genome sequence of enterohemorrhagic Escherichia coli O157:H7 and genomic comparison with a laboratory strain K-12.</title>
        <authorList>
            <person name="Hayashi T."/>
            <person name="Makino K."/>
            <person name="Ohnishi M."/>
            <person name="Kurokawa K."/>
            <person name="Ishii K."/>
            <person name="Yokoyama K."/>
            <person name="Han C.-G."/>
            <person name="Ohtsubo E."/>
            <person name="Nakayama K."/>
            <person name="Murata T."/>
            <person name="Tanaka M."/>
            <person name="Tobe T."/>
            <person name="Iida T."/>
            <person name="Takami H."/>
            <person name="Honda T."/>
            <person name="Sasakawa C."/>
            <person name="Ogasawara N."/>
            <person name="Yasunaga T."/>
            <person name="Kuhara S."/>
            <person name="Shiba T."/>
            <person name="Hattori M."/>
            <person name="Shinagawa H."/>
        </authorList>
    </citation>
    <scope>NUCLEOTIDE SEQUENCE [LARGE SCALE GENOMIC DNA]</scope>
    <source>
        <strain>O157:H7 / Sakai / RIMD 0509952 / EHEC</strain>
    </source>
</reference>
<keyword id="KW-1185">Reference proteome</keyword>
<proteinExistence type="inferred from homology"/>
<sequence>MYDNLKSLGITNPEEIDRYSLRQEANNDILKIYFQKDKGEFFAKSVKFKYPRQRKTVVADGVGQGYKEVQEISPNLRYIIDELDQICQRDRSEVDLKRKILDDLRHLESVVTNKISEIEADLEKLTRK</sequence>
<feature type="chain" id="PRO_0000211837" description="UPF0325 protein YaeH">
    <location>
        <begin position="1"/>
        <end position="128"/>
    </location>
</feature>
<dbReference type="EMBL" id="AE005174">
    <property type="protein sequence ID" value="AAG54467.1"/>
    <property type="molecule type" value="Genomic_DNA"/>
</dbReference>
<dbReference type="EMBL" id="BA000007">
    <property type="protein sequence ID" value="BAB33590.1"/>
    <property type="molecule type" value="Genomic_DNA"/>
</dbReference>
<dbReference type="PIR" id="G85500">
    <property type="entry name" value="G85500"/>
</dbReference>
<dbReference type="PIR" id="G90649">
    <property type="entry name" value="G90649"/>
</dbReference>
<dbReference type="RefSeq" id="NP_308194.1">
    <property type="nucleotide sequence ID" value="NC_002695.1"/>
</dbReference>
<dbReference type="RefSeq" id="WP_000272188.1">
    <property type="nucleotide sequence ID" value="NZ_VOAI01000002.1"/>
</dbReference>
<dbReference type="SMR" id="P62769"/>
<dbReference type="STRING" id="155864.Z0175"/>
<dbReference type="GeneID" id="913827"/>
<dbReference type="KEGG" id="ece:Z0175"/>
<dbReference type="KEGG" id="ecs:ECs_0167"/>
<dbReference type="PATRIC" id="fig|386585.9.peg.267"/>
<dbReference type="eggNOG" id="ENOG502ZBV4">
    <property type="taxonomic scope" value="Bacteria"/>
</dbReference>
<dbReference type="HOGENOM" id="CLU_136774_0_0_6"/>
<dbReference type="OMA" id="QLCQRDQ"/>
<dbReference type="Proteomes" id="UP000000558">
    <property type="component" value="Chromosome"/>
</dbReference>
<dbReference type="Proteomes" id="UP000002519">
    <property type="component" value="Chromosome"/>
</dbReference>
<dbReference type="HAMAP" id="MF_01519">
    <property type="entry name" value="UPF0325"/>
    <property type="match status" value="1"/>
</dbReference>
<dbReference type="InterPro" id="IPR020911">
    <property type="entry name" value="UPF0325"/>
</dbReference>
<dbReference type="NCBIfam" id="NF010213">
    <property type="entry name" value="PRK13677.1"/>
    <property type="match status" value="1"/>
</dbReference>
<dbReference type="Pfam" id="PF11944">
    <property type="entry name" value="DUF3461"/>
    <property type="match status" value="1"/>
</dbReference>
<protein>
    <recommendedName>
        <fullName evidence="1">UPF0325 protein YaeH</fullName>
    </recommendedName>
</protein>
<evidence type="ECO:0000255" key="1">
    <source>
        <dbReference type="HAMAP-Rule" id="MF_01519"/>
    </source>
</evidence>
<gene>
    <name evidence="1" type="primary">yaeH</name>
    <name type="ordered locus">Z0175</name>
    <name type="ordered locus">ECs0167</name>
</gene>
<comment type="similarity">
    <text evidence="1">Belongs to the UPF0325 family.</text>
</comment>
<name>YAEH_ECO57</name>